<name>SCA2_RICS2</name>
<feature type="signal peptide" evidence="2">
    <location>
        <begin position="1"/>
        <end position="17"/>
    </location>
</feature>
<feature type="chain" id="PRO_0000262571" description="Putative surface cell antigen sca2">
    <location>
        <begin position="18"/>
        <end position="1812"/>
    </location>
</feature>
<feature type="domain" description="Autotransporter" evidence="3">
    <location>
        <begin position="1533"/>
        <end position="1812"/>
    </location>
</feature>
<feature type="region of interest" description="Disordered" evidence="4">
    <location>
        <begin position="344"/>
        <end position="382"/>
    </location>
</feature>
<feature type="region of interest" description="Disordered" evidence="4">
    <location>
        <begin position="648"/>
        <end position="691"/>
    </location>
</feature>
<feature type="region of interest" description="Disordered" evidence="4">
    <location>
        <begin position="1338"/>
        <end position="1462"/>
    </location>
</feature>
<feature type="compositionally biased region" description="Polar residues" evidence="4">
    <location>
        <begin position="344"/>
        <end position="357"/>
    </location>
</feature>
<feature type="compositionally biased region" description="Polar residues" evidence="4">
    <location>
        <begin position="371"/>
        <end position="382"/>
    </location>
</feature>
<feature type="compositionally biased region" description="Pro residues" evidence="4">
    <location>
        <begin position="656"/>
        <end position="685"/>
    </location>
</feature>
<feature type="compositionally biased region" description="Basic and acidic residues" evidence="4">
    <location>
        <begin position="1349"/>
        <end position="1367"/>
    </location>
</feature>
<feature type="compositionally biased region" description="Basic and acidic residues" evidence="4">
    <location>
        <begin position="1382"/>
        <end position="1393"/>
    </location>
</feature>
<feature type="compositionally biased region" description="Acidic residues" evidence="4">
    <location>
        <begin position="1401"/>
        <end position="1416"/>
    </location>
</feature>
<feature type="compositionally biased region" description="Low complexity" evidence="4">
    <location>
        <begin position="1417"/>
        <end position="1455"/>
    </location>
</feature>
<comment type="subcellular location">
    <subcellularLocation>
        <location evidence="1">Cell outer membrane</location>
    </subcellularLocation>
</comment>
<accession>Q3L8P3</accession>
<reference key="1">
    <citation type="journal article" date="2005" name="Ann. N. Y. Acad. Sci.">
        <title>Phylogenetic study of Rickettsia species using sequences of the autotransporter protein-encoding gene sca2.</title>
        <authorList>
            <person name="Ngwamidiba M."/>
            <person name="Blanc G."/>
            <person name="Ogata H."/>
            <person name="Raoult D."/>
            <person name="Fournier P.-E."/>
        </authorList>
    </citation>
    <scope>NUCLEOTIDE SEQUENCE [GENOMIC DNA]</scope>
    <source>
        <strain>ATCC VR-151 / 246</strain>
    </source>
</reference>
<organism>
    <name type="scientific">Rickettsia sibirica (strain ATCC VR-151 / 246)</name>
    <dbReference type="NCBI Taxonomy" id="272951"/>
    <lineage>
        <taxon>Bacteria</taxon>
        <taxon>Pseudomonadati</taxon>
        <taxon>Pseudomonadota</taxon>
        <taxon>Alphaproteobacteria</taxon>
        <taxon>Rickettsiales</taxon>
        <taxon>Rickettsiaceae</taxon>
        <taxon>Rickettsieae</taxon>
        <taxon>Rickettsia</taxon>
        <taxon>spotted fever group</taxon>
        <taxon>Rickettsia sibirica subgroup</taxon>
    </lineage>
</organism>
<dbReference type="EMBL" id="AY355384">
    <property type="protein sequence ID" value="AAT79548.1"/>
    <property type="molecule type" value="Genomic_DNA"/>
</dbReference>
<dbReference type="SMR" id="Q3L8P3"/>
<dbReference type="GO" id="GO:0009279">
    <property type="term" value="C:cell outer membrane"/>
    <property type="evidence" value="ECO:0007669"/>
    <property type="project" value="UniProtKB-SubCell"/>
</dbReference>
<dbReference type="Gene3D" id="2.40.128.130">
    <property type="entry name" value="Autotransporter beta-domain"/>
    <property type="match status" value="1"/>
</dbReference>
<dbReference type="InterPro" id="IPR005546">
    <property type="entry name" value="Autotransporte_beta"/>
</dbReference>
<dbReference type="InterPro" id="IPR036709">
    <property type="entry name" value="Autotransporte_beta_dom_sf"/>
</dbReference>
<dbReference type="InterPro" id="IPR054014">
    <property type="entry name" value="Sca2"/>
</dbReference>
<dbReference type="Pfam" id="PF03797">
    <property type="entry name" value="Autotransporter"/>
    <property type="match status" value="1"/>
</dbReference>
<dbReference type="Pfam" id="PF22203">
    <property type="entry name" value="Sca2"/>
    <property type="match status" value="1"/>
</dbReference>
<dbReference type="SMART" id="SM00869">
    <property type="entry name" value="Autotransporter"/>
    <property type="match status" value="1"/>
</dbReference>
<dbReference type="SUPFAM" id="SSF103515">
    <property type="entry name" value="Autotransporter"/>
    <property type="match status" value="1"/>
</dbReference>
<dbReference type="PROSITE" id="PS51208">
    <property type="entry name" value="AUTOTRANSPORTER"/>
    <property type="match status" value="1"/>
</dbReference>
<keyword id="KW-0998">Cell outer membrane</keyword>
<keyword id="KW-0472">Membrane</keyword>
<keyword id="KW-0732">Signal</keyword>
<keyword id="KW-0812">Transmembrane</keyword>
<keyword id="KW-1134">Transmembrane beta strand</keyword>
<proteinExistence type="inferred from homology"/>
<protein>
    <recommendedName>
        <fullName>Putative surface cell antigen sca2</fullName>
    </recommendedName>
</protein>
<gene>
    <name type="primary">sca2</name>
</gene>
<sequence length="1812" mass="205565">MSTCLLTSSFLSTSARAASFKDLVSKTPAWEKHNSTQQQNIWKDLTPNEKIKKWQEAALVPSFTQAQNDLGIKYKETDLSSFLDNTRHKARQARAEILLYIERVKQQDFDTKKQEYINQGVVPTDIEAATNLGISYDPSKIDNNVEHDQKVRRAEKDKKAVIELYISSINRDIKYKHYVDNDIIPEMQEVRTALNMNKDEAQSFVASIRTEIMENAKGQYIADSHIPTEKELKKKFGISRDDNRDGYIKSIRLKVMDKEKPQYIADSHIPTEKELEQKFGADKGEATNYIASIATQMMLGKKSYYIDNNIIPNADELMNEFKIGPVKTASYINQIRAGIEANQFLNNNDTTKPSTGRSQKKSGSKNDHWYMSNQSIHNTGTSSRIFTGREKKQRYFFDPISTFKTHFNTKANKGNLTQSQHSINRIIQQEENIEEFKNLIKTDPIIALTLQVDSSYKQEAVTTILSDFNDDTIQRVLFSNDKGQLDFNTNIDVKNRPILQELLENSSSEEKTKFAERIQDYATRNISNSQFEEKARLDLIKLAASKDKSSVENFLTLQLELKNIMQPYIVNSVYILTPEIVKEINIELKNKGLIRDSLTKDYMIKLAKEVSNHTLNSVIKVILSDSNILSNETNKILGLAVGNNANNLEQTQSGIPNPPPLPLNGGIPNPPPLPLNGSMPPPPPLHSQGFSSNSKHFDLNQLQTEYPHIHSLYIQFTHNTTVQSKAPLQPTASSATSTVRSTPETAYAKLYAEYRTETGGTKANDLQDQLIKRQADLTNVIRQILTESYANQGADEKTLLNLFSISTPEIAEKAKEAFNTLAQDQYIKDITVNGKKTITSEEIIKNLFNEDTDDAVKRILLSSCKISEELKRPIKLQFNQSELIRELQGKQNPFEQLEFAYINAKNFDQDIFGNRVDELINNPNILTIVQQATFLITEDTNLRKTINSDQAQAKLDDLRTAILSTIKFEELITANLPQHDFIAIVKEKDPELLKEFLKATTLKVTGNNNLDQLRLALPSFKGMSNEQIRILSNKLKMPIILKALKECSQEKATKYIHTGNMPPPPPPLPDSQDLELAYLTSLGITKFNANTSTLKTTPKTYHFSSDIALRYKEFTLSGQKSAGYKAKYSDADLLKKAIVESVAFEHSKNLSKAHQNNKYFEQIQEAVDTMYSSFIGPRTEIGQKIHNIYTSKLLELTKDKEFIKYVEDNIILSKKLTEAFTSADSDFIDSRTGLGQKIHDIYIQQLTKYPEEEVKEAFNTANPDFIGPRTEIGQEVHNIYKSQLLELTKDQELSLFTQQVLAESTELERKYGSDIQSGNSNNEKKVGRLDQEKLQSFKQENEATNDASSTKDDTQPEDSNKKSEQSDSKTALSPRLLSSNDSKNDKSSDDKKSLLALRSSDEDDTGYATDEEELEESNSTTNEELEESNSTTNEELEESNSTTNEELEESNSTTNEELKKDVVLESEDEAIDVSFKTEAITEQDEVTQRQQISDDTSGKVAILVQATSTLHKPVHYNINDRLTVAAIGAGDEETSINRGVWISGLYGINKQRIWKNIPKYQNRTTGITIGIDAEFINSHDVIGIAYSRLESQIKYNKKLGKTTVNGHLLSIYSLKELIKGFSLQTITSYGHNYIKNRSKNINNIIGKYQNNNLSFQTLLNYKYRTKYDLHFIPNIGFQYDYSRASNYKEYNVDIENLMIQKKSNQLFESSLGGKIVFKPIVTTNNIVLTPSLYGNIEHHFNNKNTKVNAKATFKGQTLQETIITLKQPKLGYNIGSNILMSRKNINVLLEYNYYTHRKYQSHQGLIKLKVNL</sequence>
<evidence type="ECO:0000250" key="1"/>
<evidence type="ECO:0000255" key="2"/>
<evidence type="ECO:0000255" key="3">
    <source>
        <dbReference type="PROSITE-ProRule" id="PRU00556"/>
    </source>
</evidence>
<evidence type="ECO:0000256" key="4">
    <source>
        <dbReference type="SAM" id="MobiDB-lite"/>
    </source>
</evidence>